<accession>C1EYD5</accession>
<comment type="function">
    <text evidence="1">Is required not only for elongation of protein synthesis but also for the initiation of all mRNA translation through initiator tRNA(fMet) aminoacylation.</text>
</comment>
<comment type="catalytic activity">
    <reaction evidence="1">
        <text>tRNA(Met) + L-methionine + ATP = L-methionyl-tRNA(Met) + AMP + diphosphate</text>
        <dbReference type="Rhea" id="RHEA:13481"/>
        <dbReference type="Rhea" id="RHEA-COMP:9667"/>
        <dbReference type="Rhea" id="RHEA-COMP:9698"/>
        <dbReference type="ChEBI" id="CHEBI:30616"/>
        <dbReference type="ChEBI" id="CHEBI:33019"/>
        <dbReference type="ChEBI" id="CHEBI:57844"/>
        <dbReference type="ChEBI" id="CHEBI:78442"/>
        <dbReference type="ChEBI" id="CHEBI:78530"/>
        <dbReference type="ChEBI" id="CHEBI:456215"/>
        <dbReference type="EC" id="6.1.1.10"/>
    </reaction>
</comment>
<comment type="cofactor">
    <cofactor evidence="1">
        <name>Zn(2+)</name>
        <dbReference type="ChEBI" id="CHEBI:29105"/>
    </cofactor>
    <text evidence="1">Binds 1 zinc ion per subunit.</text>
</comment>
<comment type="subunit">
    <text evidence="1">Monomer.</text>
</comment>
<comment type="subcellular location">
    <subcellularLocation>
        <location evidence="1">Cytoplasm</location>
    </subcellularLocation>
</comment>
<comment type="similarity">
    <text evidence="1">Belongs to the class-I aminoacyl-tRNA synthetase family. MetG type 1 subfamily.</text>
</comment>
<keyword id="KW-0030">Aminoacyl-tRNA synthetase</keyword>
<keyword id="KW-0067">ATP-binding</keyword>
<keyword id="KW-0963">Cytoplasm</keyword>
<keyword id="KW-0436">Ligase</keyword>
<keyword id="KW-0479">Metal-binding</keyword>
<keyword id="KW-0547">Nucleotide-binding</keyword>
<keyword id="KW-0648">Protein biosynthesis</keyword>
<keyword id="KW-0862">Zinc</keyword>
<sequence>MSIFIGGAWPYANGSLHLGHIASLLPGDILARYYRAKGENVLYVSGSDCNGTPIAIRAKQEGVTAKEIANKYHEEFERCFRNLGFTYDCYTRTDSEHHHETVQNVFLRLLEEGHIYKKTVEQAYCETCTQFLPDRYVEGVCPHCHEEARGDQCDACSAILDPLDLLEKKCKLCGSTPSIQETEHFYFALHTFQEQIKRAVEIAKQTGTWRDNAIQLTERYVKEGLLDRAVSRDLPIGVPIPVEGYEDKKIYVWIEAVTGYYSASKHWAEETGKDDREFWDSEAKTYYVHGKDNIPFHSVIWPAVLLGIGEGAIPRHIVSNEYLTVEKRKLSTSKNWAVWVPDILERYDPDSIRYFLTVNAPENRDTDFSWREFIYSHNSELLGAYGNFVNRTLKFIEKYYGGIMPKGSIDVELKDKIERLYKHVGEAIEQTKFKVALESIFDAVRFANKYFDERQPWKEREDDPVSCEETIYNCVYLIANFANLLEPFLPFSSERIRNTLSIVNRNWEPQHTLPTRIDSVKPLFERIDVKQIERELEKLYGAVK</sequence>
<protein>
    <recommendedName>
        <fullName evidence="1">Methionine--tRNA ligase</fullName>
        <ecNumber evidence="1">6.1.1.10</ecNumber>
    </recommendedName>
    <alternativeName>
        <fullName evidence="1">Methionyl-tRNA synthetase</fullName>
        <shortName evidence="1">MetRS</shortName>
    </alternativeName>
</protein>
<evidence type="ECO:0000255" key="1">
    <source>
        <dbReference type="HAMAP-Rule" id="MF_00098"/>
    </source>
</evidence>
<organism>
    <name type="scientific">Bacillus cereus (strain 03BB102)</name>
    <dbReference type="NCBI Taxonomy" id="572264"/>
    <lineage>
        <taxon>Bacteria</taxon>
        <taxon>Bacillati</taxon>
        <taxon>Bacillota</taxon>
        <taxon>Bacilli</taxon>
        <taxon>Bacillales</taxon>
        <taxon>Bacillaceae</taxon>
        <taxon>Bacillus</taxon>
        <taxon>Bacillus cereus group</taxon>
    </lineage>
</organism>
<reference key="1">
    <citation type="submission" date="2009-02" db="EMBL/GenBank/DDBJ databases">
        <title>Genome sequence of Bacillus cereus 03BB102.</title>
        <authorList>
            <person name="Dodson R.J."/>
            <person name="Jackson P."/>
            <person name="Munk A.C."/>
            <person name="Brettin T."/>
            <person name="Bruce D."/>
            <person name="Detter C."/>
            <person name="Tapia R."/>
            <person name="Han C."/>
            <person name="Sutton G."/>
            <person name="Sims D."/>
        </authorList>
    </citation>
    <scope>NUCLEOTIDE SEQUENCE [LARGE SCALE GENOMIC DNA]</scope>
    <source>
        <strain>03BB102</strain>
    </source>
</reference>
<gene>
    <name evidence="1" type="primary">metG</name>
    <name type="ordered locus">BCA_5184</name>
</gene>
<proteinExistence type="inferred from homology"/>
<name>SYM_BACC3</name>
<dbReference type="EC" id="6.1.1.10" evidence="1"/>
<dbReference type="EMBL" id="CP001407">
    <property type="protein sequence ID" value="ACO28107.1"/>
    <property type="molecule type" value="Genomic_DNA"/>
</dbReference>
<dbReference type="RefSeq" id="WP_000021573.1">
    <property type="nucleotide sequence ID" value="NZ_CP009318.1"/>
</dbReference>
<dbReference type="SMR" id="C1EYD5"/>
<dbReference type="KEGG" id="bcx:BCA_5184"/>
<dbReference type="PATRIC" id="fig|572264.18.peg.5107"/>
<dbReference type="Proteomes" id="UP000002210">
    <property type="component" value="Chromosome"/>
</dbReference>
<dbReference type="GO" id="GO:0005829">
    <property type="term" value="C:cytosol"/>
    <property type="evidence" value="ECO:0007669"/>
    <property type="project" value="TreeGrafter"/>
</dbReference>
<dbReference type="GO" id="GO:0005524">
    <property type="term" value="F:ATP binding"/>
    <property type="evidence" value="ECO:0007669"/>
    <property type="project" value="UniProtKB-UniRule"/>
</dbReference>
<dbReference type="GO" id="GO:0046872">
    <property type="term" value="F:metal ion binding"/>
    <property type="evidence" value="ECO:0007669"/>
    <property type="project" value="UniProtKB-KW"/>
</dbReference>
<dbReference type="GO" id="GO:0004825">
    <property type="term" value="F:methionine-tRNA ligase activity"/>
    <property type="evidence" value="ECO:0007669"/>
    <property type="project" value="UniProtKB-UniRule"/>
</dbReference>
<dbReference type="GO" id="GO:0006431">
    <property type="term" value="P:methionyl-tRNA aminoacylation"/>
    <property type="evidence" value="ECO:0007669"/>
    <property type="project" value="UniProtKB-UniRule"/>
</dbReference>
<dbReference type="CDD" id="cd07957">
    <property type="entry name" value="Anticodon_Ia_Met"/>
    <property type="match status" value="1"/>
</dbReference>
<dbReference type="CDD" id="cd00814">
    <property type="entry name" value="MetRS_core"/>
    <property type="match status" value="1"/>
</dbReference>
<dbReference type="FunFam" id="1.10.730.10:FF:000041">
    <property type="entry name" value="Methionine--tRNA ligase"/>
    <property type="match status" value="1"/>
</dbReference>
<dbReference type="FunFam" id="2.20.28.20:FF:000001">
    <property type="entry name" value="Methionine--tRNA ligase"/>
    <property type="match status" value="1"/>
</dbReference>
<dbReference type="Gene3D" id="3.40.50.620">
    <property type="entry name" value="HUPs"/>
    <property type="match status" value="1"/>
</dbReference>
<dbReference type="Gene3D" id="1.10.730.10">
    <property type="entry name" value="Isoleucyl-tRNA Synthetase, Domain 1"/>
    <property type="match status" value="1"/>
</dbReference>
<dbReference type="Gene3D" id="2.20.28.20">
    <property type="entry name" value="Methionyl-tRNA synthetase, Zn-domain"/>
    <property type="match status" value="1"/>
</dbReference>
<dbReference type="HAMAP" id="MF_00098">
    <property type="entry name" value="Met_tRNA_synth_type1"/>
    <property type="match status" value="1"/>
</dbReference>
<dbReference type="InterPro" id="IPR001412">
    <property type="entry name" value="aa-tRNA-synth_I_CS"/>
</dbReference>
<dbReference type="InterPro" id="IPR041872">
    <property type="entry name" value="Anticodon_Met"/>
</dbReference>
<dbReference type="InterPro" id="IPR013155">
    <property type="entry name" value="M/V/L/I-tRNA-synth_anticd-bd"/>
</dbReference>
<dbReference type="InterPro" id="IPR023458">
    <property type="entry name" value="Met-tRNA_ligase_1"/>
</dbReference>
<dbReference type="InterPro" id="IPR014758">
    <property type="entry name" value="Met-tRNA_synth"/>
</dbReference>
<dbReference type="InterPro" id="IPR015413">
    <property type="entry name" value="Methionyl/Leucyl_tRNA_Synth"/>
</dbReference>
<dbReference type="InterPro" id="IPR033911">
    <property type="entry name" value="MetRS_core"/>
</dbReference>
<dbReference type="InterPro" id="IPR029038">
    <property type="entry name" value="MetRS_Zn"/>
</dbReference>
<dbReference type="InterPro" id="IPR014729">
    <property type="entry name" value="Rossmann-like_a/b/a_fold"/>
</dbReference>
<dbReference type="InterPro" id="IPR009080">
    <property type="entry name" value="tRNAsynth_Ia_anticodon-bd"/>
</dbReference>
<dbReference type="NCBIfam" id="TIGR00398">
    <property type="entry name" value="metG"/>
    <property type="match status" value="1"/>
</dbReference>
<dbReference type="PANTHER" id="PTHR45765">
    <property type="entry name" value="METHIONINE--TRNA LIGASE"/>
    <property type="match status" value="1"/>
</dbReference>
<dbReference type="PANTHER" id="PTHR45765:SF1">
    <property type="entry name" value="METHIONINE--TRNA LIGASE, CYTOPLASMIC"/>
    <property type="match status" value="1"/>
</dbReference>
<dbReference type="Pfam" id="PF08264">
    <property type="entry name" value="Anticodon_1"/>
    <property type="match status" value="1"/>
</dbReference>
<dbReference type="Pfam" id="PF09334">
    <property type="entry name" value="tRNA-synt_1g"/>
    <property type="match status" value="1"/>
</dbReference>
<dbReference type="PRINTS" id="PR01041">
    <property type="entry name" value="TRNASYNTHMET"/>
</dbReference>
<dbReference type="SUPFAM" id="SSF47323">
    <property type="entry name" value="Anticodon-binding domain of a subclass of class I aminoacyl-tRNA synthetases"/>
    <property type="match status" value="1"/>
</dbReference>
<dbReference type="SUPFAM" id="SSF57770">
    <property type="entry name" value="Methionyl-tRNA synthetase (MetRS), Zn-domain"/>
    <property type="match status" value="1"/>
</dbReference>
<dbReference type="SUPFAM" id="SSF52374">
    <property type="entry name" value="Nucleotidylyl transferase"/>
    <property type="match status" value="1"/>
</dbReference>
<dbReference type="PROSITE" id="PS00178">
    <property type="entry name" value="AA_TRNA_LIGASE_I"/>
    <property type="match status" value="1"/>
</dbReference>
<feature type="chain" id="PRO_1000199272" description="Methionine--tRNA ligase">
    <location>
        <begin position="1"/>
        <end position="544"/>
    </location>
</feature>
<feature type="short sequence motif" description="'HIGH' region">
    <location>
        <begin position="10"/>
        <end position="20"/>
    </location>
</feature>
<feature type="short sequence motif" description="'KMSKS' region">
    <location>
        <begin position="329"/>
        <end position="333"/>
    </location>
</feature>
<feature type="binding site" evidence="1">
    <location>
        <position position="141"/>
    </location>
    <ligand>
        <name>Zn(2+)</name>
        <dbReference type="ChEBI" id="CHEBI:29105"/>
    </ligand>
</feature>
<feature type="binding site" evidence="1">
    <location>
        <position position="144"/>
    </location>
    <ligand>
        <name>Zn(2+)</name>
        <dbReference type="ChEBI" id="CHEBI:29105"/>
    </ligand>
</feature>
<feature type="binding site" evidence="1">
    <location>
        <position position="153"/>
    </location>
    <ligand>
        <name>Zn(2+)</name>
        <dbReference type="ChEBI" id="CHEBI:29105"/>
    </ligand>
</feature>
<feature type="binding site" evidence="1">
    <location>
        <position position="156"/>
    </location>
    <ligand>
        <name>Zn(2+)</name>
        <dbReference type="ChEBI" id="CHEBI:29105"/>
    </ligand>
</feature>
<feature type="binding site" evidence="1">
    <location>
        <position position="332"/>
    </location>
    <ligand>
        <name>ATP</name>
        <dbReference type="ChEBI" id="CHEBI:30616"/>
    </ligand>
</feature>